<proteinExistence type="inferred from homology"/>
<feature type="transit peptide" description="Mitochondrion" evidence="2">
    <location>
        <begin position="1"/>
        <end position="31"/>
    </location>
</feature>
<feature type="chain" id="PRO_0000406668" description="MICOS complex subunit MIC60">
    <location>
        <begin position="32"/>
        <end position="621"/>
    </location>
</feature>
<feature type="topological domain" description="Mitochondrial matrix" evidence="2">
    <location>
        <begin position="32"/>
        <end position="116"/>
    </location>
</feature>
<feature type="transmembrane region" description="Helical" evidence="2">
    <location>
        <begin position="117"/>
        <end position="137"/>
    </location>
</feature>
<feature type="topological domain" description="Mitochondrial intermembrane" evidence="2">
    <location>
        <begin position="138"/>
        <end position="621"/>
    </location>
</feature>
<feature type="region of interest" description="Disordered" evidence="3">
    <location>
        <begin position="1"/>
        <end position="20"/>
    </location>
</feature>
<feature type="region of interest" description="Disordered" evidence="3">
    <location>
        <begin position="34"/>
        <end position="109"/>
    </location>
</feature>
<feature type="coiled-coil region" evidence="2">
    <location>
        <begin position="311"/>
        <end position="388"/>
    </location>
</feature>
<feature type="compositionally biased region" description="Low complexity" evidence="3">
    <location>
        <begin position="40"/>
        <end position="64"/>
    </location>
</feature>
<gene>
    <name type="primary">MIC60</name>
    <name type="ORF">SNOG_01086</name>
</gene>
<keyword id="KW-0175">Coiled coil</keyword>
<keyword id="KW-0472">Membrane</keyword>
<keyword id="KW-0496">Mitochondrion</keyword>
<keyword id="KW-0999">Mitochondrion inner membrane</keyword>
<keyword id="KW-0809">Transit peptide</keyword>
<keyword id="KW-0812">Transmembrane</keyword>
<keyword id="KW-1133">Transmembrane helix</keyword>
<accession>Q0V4H8</accession>
<organism>
    <name type="scientific">Phaeosphaeria nodorum (strain SN15 / ATCC MYA-4574 / FGSC 10173)</name>
    <name type="common">Glume blotch fungus</name>
    <name type="synonym">Parastagonospora nodorum</name>
    <dbReference type="NCBI Taxonomy" id="321614"/>
    <lineage>
        <taxon>Eukaryota</taxon>
        <taxon>Fungi</taxon>
        <taxon>Dikarya</taxon>
        <taxon>Ascomycota</taxon>
        <taxon>Pezizomycotina</taxon>
        <taxon>Dothideomycetes</taxon>
        <taxon>Pleosporomycetidae</taxon>
        <taxon>Pleosporales</taxon>
        <taxon>Pleosporineae</taxon>
        <taxon>Phaeosphaeriaceae</taxon>
        <taxon>Parastagonospora</taxon>
    </lineage>
</organism>
<evidence type="ECO:0000250" key="1"/>
<evidence type="ECO:0000255" key="2"/>
<evidence type="ECO:0000256" key="3">
    <source>
        <dbReference type="SAM" id="MobiDB-lite"/>
    </source>
</evidence>
<evidence type="ECO:0000305" key="4"/>
<reference key="1">
    <citation type="journal article" date="2007" name="Plant Cell">
        <title>Dothideomycete-plant interactions illuminated by genome sequencing and EST analysis of the wheat pathogen Stagonospora nodorum.</title>
        <authorList>
            <person name="Hane J.K."/>
            <person name="Lowe R.G.T."/>
            <person name="Solomon P.S."/>
            <person name="Tan K.-C."/>
            <person name="Schoch C.L."/>
            <person name="Spatafora J.W."/>
            <person name="Crous P.W."/>
            <person name="Kodira C.D."/>
            <person name="Birren B.W."/>
            <person name="Galagan J.E."/>
            <person name="Torriani S.F.F."/>
            <person name="McDonald B.A."/>
            <person name="Oliver R.P."/>
        </authorList>
    </citation>
    <scope>NUCLEOTIDE SEQUENCE [LARGE SCALE GENOMIC DNA]</scope>
    <source>
        <strain>SN15 / ATCC MYA-4574 / FGSC 10173</strain>
    </source>
</reference>
<dbReference type="EMBL" id="CH445325">
    <property type="protein sequence ID" value="EAT92581.2"/>
    <property type="molecule type" value="Genomic_DNA"/>
</dbReference>
<dbReference type="RefSeq" id="XP_001791743.1">
    <property type="nucleotide sequence ID" value="XM_001791691.1"/>
</dbReference>
<dbReference type="SMR" id="Q0V4H8"/>
<dbReference type="FunCoup" id="Q0V4H8">
    <property type="interactions" value="157"/>
</dbReference>
<dbReference type="STRING" id="321614.Q0V4H8"/>
<dbReference type="EnsemblFungi" id="SNOT_01086">
    <property type="protein sequence ID" value="SNOT_01086"/>
    <property type="gene ID" value="SNOG_01086"/>
</dbReference>
<dbReference type="GeneID" id="5967970"/>
<dbReference type="KEGG" id="pno:SNOG_01086"/>
<dbReference type="VEuPathDB" id="FungiDB:JI435_010860"/>
<dbReference type="eggNOG" id="KOG1854">
    <property type="taxonomic scope" value="Eukaryota"/>
</dbReference>
<dbReference type="HOGENOM" id="CLU_008024_1_2_1"/>
<dbReference type="InParanoid" id="Q0V4H8"/>
<dbReference type="Proteomes" id="UP000001055">
    <property type="component" value="Unassembled WGS sequence"/>
</dbReference>
<dbReference type="GO" id="GO:0061617">
    <property type="term" value="C:MICOS complex"/>
    <property type="evidence" value="ECO:0000318"/>
    <property type="project" value="GO_Central"/>
</dbReference>
<dbReference type="GO" id="GO:0042407">
    <property type="term" value="P:cristae formation"/>
    <property type="evidence" value="ECO:0000318"/>
    <property type="project" value="GO_Central"/>
</dbReference>
<dbReference type="InterPro" id="IPR019133">
    <property type="entry name" value="MIC60"/>
</dbReference>
<dbReference type="PANTHER" id="PTHR15415:SF7">
    <property type="entry name" value="MICOS COMPLEX SUBUNIT MIC60"/>
    <property type="match status" value="1"/>
</dbReference>
<dbReference type="PANTHER" id="PTHR15415">
    <property type="entry name" value="MITOFILIN"/>
    <property type="match status" value="1"/>
</dbReference>
<dbReference type="Pfam" id="PF09731">
    <property type="entry name" value="Mitofilin"/>
    <property type="match status" value="2"/>
</dbReference>
<sequence>MLRASILRASPAVRPLARQTRPQWRVVQRCYADNKNLGETAVPNPAPTVTPSSTEKATIPSSDIPKPPPAPETAGASRSAPTIQPATTPPTGPGSASIAPDPKQPKPKKKGRIRRLLFWLTILSGLGYAGGVWYSLVSDNFHDFFTEYVPYGEDAVAYFEEREFRKRVPWPCWDSPRLQPQNLVRRTSSSILRPQWAEWRVLPTRATATSGTKGPHTIANVQEKKQEAAQTATVVKEEAAAPAPAKPVNHLDHLAVPDANDAVVQDVVKIVNDIITVINADSAHDGKYNSALDKAKSELGRVVSDINLMKANLRKESEEKVKSAHDEFEQAAKELVQRLDHQMQAQEAHWKEEFENERERLSQTYKDRLRSELEAAEKVYEQKTKNELLQQSIHLQKSFTASVRERVEAERDGRLGKLNELSSSVHELEKLTAEWNSVVDANLKTQHLVVAVEAVKSALETQATPKPFVTELAALKEIAADDPVVSAAIASINPAAYQRGIPSPALLIDRFRRVAAEVRKAALLPEDAGVASHIASLAMSKVLFKKSGLAVGQDVEAVLARTEVLLEEGDLDAAAREMNGLQGWAKVLSKDWLGECRRVLEVRQALDVIATEARLNSLLVD</sequence>
<comment type="function">
    <text evidence="1">Component of the MICOS complex, a large protein complex of the mitochondrial inner membrane that plays crucial roles in the maintenance of crista junctions, inner membrane architecture, and formation of contact sites to the outer membrane. Plays a role in keeping cristae membranes connected to the inner boundary membrane. Also promotes protein import via the mitochondrial intermembrane space assembly (MIA) pathway (By similarity).</text>
</comment>
<comment type="subunit">
    <text evidence="1">Component of the mitochondrial contact site and cristae organizing system (MICOS) complex.</text>
</comment>
<comment type="subcellular location">
    <subcellularLocation>
        <location evidence="1">Mitochondrion inner membrane</location>
        <topology evidence="1">Single-pass membrane protein</topology>
    </subcellularLocation>
</comment>
<comment type="similarity">
    <text evidence="4">Belongs to the MICOS complex subunit Mic60 family.</text>
</comment>
<protein>
    <recommendedName>
        <fullName>MICOS complex subunit MIC60</fullName>
    </recommendedName>
    <alternativeName>
        <fullName>Mitofilin</fullName>
    </alternativeName>
</protein>
<name>MIC60_PHANO</name>